<feature type="chain" id="PRO_0000290653" description="mRNA export factor rsm1">
    <location>
        <begin position="1"/>
        <end position="296"/>
    </location>
</feature>
<feature type="zinc finger region" description="C3HC-type">
    <location>
        <begin position="40"/>
        <end position="174"/>
    </location>
</feature>
<gene>
    <name type="primary">rsm1</name>
    <name type="ORF">SPCC1753.05</name>
</gene>
<evidence type="ECO:0000269" key="1">
    <source>
    </source>
</evidence>
<evidence type="ECO:0000269" key="2">
    <source>
    </source>
</evidence>
<sequence>MSFPTDMETNEILDQLDKIDERNEDILLKSLKASKCTYKPWSREEFLRRLLTYRSRWAYVNDPQIGEINCCLNGWLCESNNILVCDVCRNKINLTALQQVDAENDSLNELPEKTKERLEVSLKEEHQDNCLWRLHKFPPDIYHLSVSAELVQVGRRFNSLSTRLVSTHLPEEMTLKRLEKVANKIRVDWEKEDAAVLLGIALTGWSEQVPGRLYVCNYCHRRLGVWNLQSEGQDFDVLEEHKKSCPWVIPQPFTDLLGWQQIFELLCKESIFQSTTKTMDVSQYTDYTFSLLQGLR</sequence>
<accession>O94506</accession>
<proteinExistence type="predicted"/>
<protein>
    <recommendedName>
        <fullName>mRNA export factor rsm1</fullName>
    </recommendedName>
</protein>
<organism>
    <name type="scientific">Schizosaccharomyces pombe (strain 972 / ATCC 24843)</name>
    <name type="common">Fission yeast</name>
    <dbReference type="NCBI Taxonomy" id="284812"/>
    <lineage>
        <taxon>Eukaryota</taxon>
        <taxon>Fungi</taxon>
        <taxon>Dikarya</taxon>
        <taxon>Ascomycota</taxon>
        <taxon>Taphrinomycotina</taxon>
        <taxon>Schizosaccharomycetes</taxon>
        <taxon>Schizosaccharomycetales</taxon>
        <taxon>Schizosaccharomycetaceae</taxon>
        <taxon>Schizosaccharomyces</taxon>
    </lineage>
</organism>
<dbReference type="EMBL" id="CU329672">
    <property type="protein sequence ID" value="CAA22779.1"/>
    <property type="molecule type" value="Genomic_DNA"/>
</dbReference>
<dbReference type="PIR" id="T41128">
    <property type="entry name" value="T41128"/>
</dbReference>
<dbReference type="RefSeq" id="NP_588231.1">
    <property type="nucleotide sequence ID" value="NM_001023221.2"/>
</dbReference>
<dbReference type="BioGRID" id="275558">
    <property type="interactions" value="4"/>
</dbReference>
<dbReference type="STRING" id="284812.O94506"/>
<dbReference type="iPTMnet" id="O94506"/>
<dbReference type="PaxDb" id="4896-SPCC1753.05.1"/>
<dbReference type="EnsemblFungi" id="SPCC1753.05.1">
    <property type="protein sequence ID" value="SPCC1753.05.1:pep"/>
    <property type="gene ID" value="SPCC1753.05"/>
</dbReference>
<dbReference type="GeneID" id="2538984"/>
<dbReference type="KEGG" id="spo:2538984"/>
<dbReference type="PomBase" id="SPCC1753.05">
    <property type="gene designation" value="rsm1"/>
</dbReference>
<dbReference type="VEuPathDB" id="FungiDB:SPCC1753.05"/>
<dbReference type="eggNOG" id="KOG4765">
    <property type="taxonomic scope" value="Eukaryota"/>
</dbReference>
<dbReference type="HOGENOM" id="CLU_940597_0_0_1"/>
<dbReference type="InParanoid" id="O94506"/>
<dbReference type="OMA" id="YECEYCH"/>
<dbReference type="PhylomeDB" id="O94506"/>
<dbReference type="PRO" id="PR:O94506"/>
<dbReference type="Proteomes" id="UP000002485">
    <property type="component" value="Chromosome III"/>
</dbReference>
<dbReference type="GO" id="GO:0005829">
    <property type="term" value="C:cytosol"/>
    <property type="evidence" value="ECO:0007005"/>
    <property type="project" value="PomBase"/>
</dbReference>
<dbReference type="GO" id="GO:0044615">
    <property type="term" value="C:nuclear pore nuclear basket"/>
    <property type="evidence" value="ECO:0000266"/>
    <property type="project" value="PomBase"/>
</dbReference>
<dbReference type="GO" id="GO:0005634">
    <property type="term" value="C:nucleus"/>
    <property type="evidence" value="ECO:0007005"/>
    <property type="project" value="PomBase"/>
</dbReference>
<dbReference type="GO" id="GO:0003723">
    <property type="term" value="F:RNA binding"/>
    <property type="evidence" value="ECO:0007669"/>
    <property type="project" value="UniProtKB-KW"/>
</dbReference>
<dbReference type="GO" id="GO:0017056">
    <property type="term" value="F:structural constituent of nuclear pore"/>
    <property type="evidence" value="ECO:0000304"/>
    <property type="project" value="PomBase"/>
</dbReference>
<dbReference type="GO" id="GO:0008270">
    <property type="term" value="F:zinc ion binding"/>
    <property type="evidence" value="ECO:0007669"/>
    <property type="project" value="UniProtKB-KW"/>
</dbReference>
<dbReference type="GO" id="GO:0051028">
    <property type="term" value="P:mRNA transport"/>
    <property type="evidence" value="ECO:0007669"/>
    <property type="project" value="UniProtKB-KW"/>
</dbReference>
<dbReference type="GO" id="GO:0071030">
    <property type="term" value="P:nuclear mRNA surveillance of spliceosomal pre-mRNA splicing"/>
    <property type="evidence" value="ECO:0000304"/>
    <property type="project" value="PomBase"/>
</dbReference>
<dbReference type="InterPro" id="IPR013909">
    <property type="entry name" value="NuBaID_C"/>
</dbReference>
<dbReference type="InterPro" id="IPR012935">
    <property type="entry name" value="NuBaID_N"/>
</dbReference>
<dbReference type="PANTHER" id="PTHR15835">
    <property type="entry name" value="NUCLEAR-INTERACTING PARTNER OF ALK"/>
    <property type="match status" value="1"/>
</dbReference>
<dbReference type="PANTHER" id="PTHR15835:SF6">
    <property type="entry name" value="ZINC FINGER C3HC-TYPE PROTEIN 1"/>
    <property type="match status" value="1"/>
</dbReference>
<dbReference type="Pfam" id="PF08600">
    <property type="entry name" value="NuBaID_C"/>
    <property type="match status" value="1"/>
</dbReference>
<dbReference type="Pfam" id="PF07967">
    <property type="entry name" value="zf-C3HC"/>
    <property type="match status" value="1"/>
</dbReference>
<comment type="function">
    <text evidence="1">Involved in the export of mRNA from the nucleus to the cytoplasm.</text>
</comment>
<comment type="subcellular location">
    <subcellularLocation>
        <location evidence="2">Cytoplasm</location>
    </subcellularLocation>
    <subcellularLocation>
        <location evidence="2">Nucleus</location>
    </subcellularLocation>
</comment>
<name>RSM1_SCHPO</name>
<keyword id="KW-0963">Cytoplasm</keyword>
<keyword id="KW-0479">Metal-binding</keyword>
<keyword id="KW-0509">mRNA transport</keyword>
<keyword id="KW-0539">Nucleus</keyword>
<keyword id="KW-1185">Reference proteome</keyword>
<keyword id="KW-0694">RNA-binding</keyword>
<keyword id="KW-0813">Transport</keyword>
<keyword id="KW-0862">Zinc</keyword>
<keyword id="KW-0863">Zinc-finger</keyword>
<reference key="1">
    <citation type="journal article" date="2002" name="Nature">
        <title>The genome sequence of Schizosaccharomyces pombe.</title>
        <authorList>
            <person name="Wood V."/>
            <person name="Gwilliam R."/>
            <person name="Rajandream M.A."/>
            <person name="Lyne M.H."/>
            <person name="Lyne R."/>
            <person name="Stewart A."/>
            <person name="Sgouros J.G."/>
            <person name="Peat N."/>
            <person name="Hayles J."/>
            <person name="Baker S.G."/>
            <person name="Basham D."/>
            <person name="Bowman S."/>
            <person name="Brooks K."/>
            <person name="Brown D."/>
            <person name="Brown S."/>
            <person name="Chillingworth T."/>
            <person name="Churcher C.M."/>
            <person name="Collins M."/>
            <person name="Connor R."/>
            <person name="Cronin A."/>
            <person name="Davis P."/>
            <person name="Feltwell T."/>
            <person name="Fraser A."/>
            <person name="Gentles S."/>
            <person name="Goble A."/>
            <person name="Hamlin N."/>
            <person name="Harris D.E."/>
            <person name="Hidalgo J."/>
            <person name="Hodgson G."/>
            <person name="Holroyd S."/>
            <person name="Hornsby T."/>
            <person name="Howarth S."/>
            <person name="Huckle E.J."/>
            <person name="Hunt S."/>
            <person name="Jagels K."/>
            <person name="James K.D."/>
            <person name="Jones L."/>
            <person name="Jones M."/>
            <person name="Leather S."/>
            <person name="McDonald S."/>
            <person name="McLean J."/>
            <person name="Mooney P."/>
            <person name="Moule S."/>
            <person name="Mungall K.L."/>
            <person name="Murphy L.D."/>
            <person name="Niblett D."/>
            <person name="Odell C."/>
            <person name="Oliver K."/>
            <person name="O'Neil S."/>
            <person name="Pearson D."/>
            <person name="Quail M.A."/>
            <person name="Rabbinowitsch E."/>
            <person name="Rutherford K.M."/>
            <person name="Rutter S."/>
            <person name="Saunders D."/>
            <person name="Seeger K."/>
            <person name="Sharp S."/>
            <person name="Skelton J."/>
            <person name="Simmonds M.N."/>
            <person name="Squares R."/>
            <person name="Squares S."/>
            <person name="Stevens K."/>
            <person name="Taylor K."/>
            <person name="Taylor R.G."/>
            <person name="Tivey A."/>
            <person name="Walsh S.V."/>
            <person name="Warren T."/>
            <person name="Whitehead S."/>
            <person name="Woodward J.R."/>
            <person name="Volckaert G."/>
            <person name="Aert R."/>
            <person name="Robben J."/>
            <person name="Grymonprez B."/>
            <person name="Weltjens I."/>
            <person name="Vanstreels E."/>
            <person name="Rieger M."/>
            <person name="Schaefer M."/>
            <person name="Mueller-Auer S."/>
            <person name="Gabel C."/>
            <person name="Fuchs M."/>
            <person name="Duesterhoeft A."/>
            <person name="Fritzc C."/>
            <person name="Holzer E."/>
            <person name="Moestl D."/>
            <person name="Hilbert H."/>
            <person name="Borzym K."/>
            <person name="Langer I."/>
            <person name="Beck A."/>
            <person name="Lehrach H."/>
            <person name="Reinhardt R."/>
            <person name="Pohl T.M."/>
            <person name="Eger P."/>
            <person name="Zimmermann W."/>
            <person name="Wedler H."/>
            <person name="Wambutt R."/>
            <person name="Purnelle B."/>
            <person name="Goffeau A."/>
            <person name="Cadieu E."/>
            <person name="Dreano S."/>
            <person name="Gloux S."/>
            <person name="Lelaure V."/>
            <person name="Mottier S."/>
            <person name="Galibert F."/>
            <person name="Aves S.J."/>
            <person name="Xiang Z."/>
            <person name="Hunt C."/>
            <person name="Moore K."/>
            <person name="Hurst S.M."/>
            <person name="Lucas M."/>
            <person name="Rochet M."/>
            <person name="Gaillardin C."/>
            <person name="Tallada V.A."/>
            <person name="Garzon A."/>
            <person name="Thode G."/>
            <person name="Daga R.R."/>
            <person name="Cruzado L."/>
            <person name="Jimenez J."/>
            <person name="Sanchez M."/>
            <person name="del Rey F."/>
            <person name="Benito J."/>
            <person name="Dominguez A."/>
            <person name="Revuelta J.L."/>
            <person name="Moreno S."/>
            <person name="Armstrong J."/>
            <person name="Forsburg S.L."/>
            <person name="Cerutti L."/>
            <person name="Lowe T."/>
            <person name="McCombie W.R."/>
            <person name="Paulsen I."/>
            <person name="Potashkin J."/>
            <person name="Shpakovski G.V."/>
            <person name="Ussery D."/>
            <person name="Barrell B.G."/>
            <person name="Nurse P."/>
        </authorList>
    </citation>
    <scope>NUCLEOTIDE SEQUENCE [LARGE SCALE GENOMIC DNA]</scope>
    <source>
        <strain>972 / ATCC 24843</strain>
    </source>
</reference>
<reference key="2">
    <citation type="journal article" date="2004" name="J. Microbiol.">
        <title>Schizosaccharomyces pombe rsm1 genetically interacts with spmex67, which is involved in mRNA export.</title>
        <authorList>
            <person name="Yoon J.H."/>
        </authorList>
    </citation>
    <scope>FUNCTION</scope>
</reference>
<reference key="3">
    <citation type="journal article" date="2006" name="Nat. Biotechnol.">
        <title>ORFeome cloning and global analysis of protein localization in the fission yeast Schizosaccharomyces pombe.</title>
        <authorList>
            <person name="Matsuyama A."/>
            <person name="Arai R."/>
            <person name="Yashiroda Y."/>
            <person name="Shirai A."/>
            <person name="Kamata A."/>
            <person name="Sekido S."/>
            <person name="Kobayashi Y."/>
            <person name="Hashimoto A."/>
            <person name="Hamamoto M."/>
            <person name="Hiraoka Y."/>
            <person name="Horinouchi S."/>
            <person name="Yoshida M."/>
        </authorList>
    </citation>
    <scope>SUBCELLULAR LOCATION [LARGE SCALE ANALYSIS]</scope>
</reference>